<name>FOLD_BURM7</name>
<reference key="1">
    <citation type="journal article" date="2010" name="Genome Biol. Evol.">
        <title>Continuing evolution of Burkholderia mallei through genome reduction and large-scale rearrangements.</title>
        <authorList>
            <person name="Losada L."/>
            <person name="Ronning C.M."/>
            <person name="DeShazer D."/>
            <person name="Woods D."/>
            <person name="Fedorova N."/>
            <person name="Kim H.S."/>
            <person name="Shabalina S.A."/>
            <person name="Pearson T.R."/>
            <person name="Brinkac L."/>
            <person name="Tan P."/>
            <person name="Nandi T."/>
            <person name="Crabtree J."/>
            <person name="Badger J."/>
            <person name="Beckstrom-Sternberg S."/>
            <person name="Saqib M."/>
            <person name="Schutzer S.E."/>
            <person name="Keim P."/>
            <person name="Nierman W.C."/>
        </authorList>
    </citation>
    <scope>NUCLEOTIDE SEQUENCE [LARGE SCALE GENOMIC DNA]</scope>
    <source>
        <strain>NCTC 10247</strain>
    </source>
</reference>
<comment type="function">
    <text evidence="1">Catalyzes the oxidation of 5,10-methylenetetrahydrofolate to 5,10-methenyltetrahydrofolate and then the hydrolysis of 5,10-methenyltetrahydrofolate to 10-formyltetrahydrofolate.</text>
</comment>
<comment type="catalytic activity">
    <reaction evidence="1">
        <text>(6R)-5,10-methylene-5,6,7,8-tetrahydrofolate + NADP(+) = (6R)-5,10-methenyltetrahydrofolate + NADPH</text>
        <dbReference type="Rhea" id="RHEA:22812"/>
        <dbReference type="ChEBI" id="CHEBI:15636"/>
        <dbReference type="ChEBI" id="CHEBI:57455"/>
        <dbReference type="ChEBI" id="CHEBI:57783"/>
        <dbReference type="ChEBI" id="CHEBI:58349"/>
        <dbReference type="EC" id="1.5.1.5"/>
    </reaction>
</comment>
<comment type="catalytic activity">
    <reaction evidence="1">
        <text>(6R)-5,10-methenyltetrahydrofolate + H2O = (6R)-10-formyltetrahydrofolate + H(+)</text>
        <dbReference type="Rhea" id="RHEA:23700"/>
        <dbReference type="ChEBI" id="CHEBI:15377"/>
        <dbReference type="ChEBI" id="CHEBI:15378"/>
        <dbReference type="ChEBI" id="CHEBI:57455"/>
        <dbReference type="ChEBI" id="CHEBI:195366"/>
        <dbReference type="EC" id="3.5.4.9"/>
    </reaction>
</comment>
<comment type="pathway">
    <text evidence="1">One-carbon metabolism; tetrahydrofolate interconversion.</text>
</comment>
<comment type="subunit">
    <text evidence="1">Homodimer.</text>
</comment>
<comment type="similarity">
    <text evidence="1">Belongs to the tetrahydrofolate dehydrogenase/cyclohydrolase family.</text>
</comment>
<accession>A3MLB7</accession>
<sequence length="285" mass="29873">MTATLIDGNALSKTLRAQAAERAAALAARGHRPGLAVILVGDNPASEVYVRNKIKACEDNGFFSLKDRYPATLSEPELLARIDELNRDPKIHGILVQLPLPAHIDSHKVIEAIAPEKDVDGFHVANAGALLTGKPLFRPCTPYGVMKMFEAYKIPLQGANAVVIGRSNIVGKPMALLLLEAGATVTICHSKTCELAAHTRAADIVVAAVGKRNVLTADMVKPGATVIDVGMNRNDEGKLCGDVDFAGVSQVAGHITPVPGGVGPMTITMLLVNTIEAAERAAAAA</sequence>
<keyword id="KW-0028">Amino-acid biosynthesis</keyword>
<keyword id="KW-0368">Histidine biosynthesis</keyword>
<keyword id="KW-0378">Hydrolase</keyword>
<keyword id="KW-0486">Methionine biosynthesis</keyword>
<keyword id="KW-0511">Multifunctional enzyme</keyword>
<keyword id="KW-0521">NADP</keyword>
<keyword id="KW-0554">One-carbon metabolism</keyword>
<keyword id="KW-0560">Oxidoreductase</keyword>
<keyword id="KW-0658">Purine biosynthesis</keyword>
<feature type="chain" id="PRO_1000069229" description="Bifunctional protein FolD">
    <location>
        <begin position="1"/>
        <end position="285"/>
    </location>
</feature>
<feature type="binding site" evidence="1">
    <location>
        <begin position="165"/>
        <end position="167"/>
    </location>
    <ligand>
        <name>NADP(+)</name>
        <dbReference type="ChEBI" id="CHEBI:58349"/>
    </ligand>
</feature>
<feature type="binding site" evidence="1">
    <location>
        <position position="190"/>
    </location>
    <ligand>
        <name>NADP(+)</name>
        <dbReference type="ChEBI" id="CHEBI:58349"/>
    </ligand>
</feature>
<protein>
    <recommendedName>
        <fullName evidence="1">Bifunctional protein FolD</fullName>
    </recommendedName>
    <domain>
        <recommendedName>
            <fullName evidence="1">Methylenetetrahydrofolate dehydrogenase</fullName>
            <ecNumber evidence="1">1.5.1.5</ecNumber>
        </recommendedName>
    </domain>
    <domain>
        <recommendedName>
            <fullName evidence="1">Methenyltetrahydrofolate cyclohydrolase</fullName>
            <ecNumber evidence="1">3.5.4.9</ecNumber>
        </recommendedName>
    </domain>
</protein>
<dbReference type="EC" id="1.5.1.5" evidence="1"/>
<dbReference type="EC" id="3.5.4.9" evidence="1"/>
<dbReference type="EMBL" id="CP000548">
    <property type="protein sequence ID" value="ABO07076.1"/>
    <property type="molecule type" value="Genomic_DNA"/>
</dbReference>
<dbReference type="RefSeq" id="WP_004192825.1">
    <property type="nucleotide sequence ID" value="NZ_CP007802.1"/>
</dbReference>
<dbReference type="SMR" id="A3MLB7"/>
<dbReference type="GeneID" id="92979446"/>
<dbReference type="KEGG" id="bmaz:BM44_1646"/>
<dbReference type="KEGG" id="bmn:BMA10247_1506"/>
<dbReference type="PATRIC" id="fig|320389.8.peg.1841"/>
<dbReference type="UniPathway" id="UPA00193"/>
<dbReference type="GO" id="GO:0005829">
    <property type="term" value="C:cytosol"/>
    <property type="evidence" value="ECO:0007669"/>
    <property type="project" value="TreeGrafter"/>
</dbReference>
<dbReference type="GO" id="GO:0004477">
    <property type="term" value="F:methenyltetrahydrofolate cyclohydrolase activity"/>
    <property type="evidence" value="ECO:0007669"/>
    <property type="project" value="UniProtKB-UniRule"/>
</dbReference>
<dbReference type="GO" id="GO:0004488">
    <property type="term" value="F:methylenetetrahydrofolate dehydrogenase (NADP+) activity"/>
    <property type="evidence" value="ECO:0007669"/>
    <property type="project" value="UniProtKB-UniRule"/>
</dbReference>
<dbReference type="GO" id="GO:0000105">
    <property type="term" value="P:L-histidine biosynthetic process"/>
    <property type="evidence" value="ECO:0007669"/>
    <property type="project" value="UniProtKB-KW"/>
</dbReference>
<dbReference type="GO" id="GO:0009086">
    <property type="term" value="P:methionine biosynthetic process"/>
    <property type="evidence" value="ECO:0007669"/>
    <property type="project" value="UniProtKB-KW"/>
</dbReference>
<dbReference type="GO" id="GO:0006164">
    <property type="term" value="P:purine nucleotide biosynthetic process"/>
    <property type="evidence" value="ECO:0007669"/>
    <property type="project" value="UniProtKB-KW"/>
</dbReference>
<dbReference type="GO" id="GO:0035999">
    <property type="term" value="P:tetrahydrofolate interconversion"/>
    <property type="evidence" value="ECO:0007669"/>
    <property type="project" value="UniProtKB-UniRule"/>
</dbReference>
<dbReference type="CDD" id="cd01080">
    <property type="entry name" value="NAD_bind_m-THF_DH_Cyclohyd"/>
    <property type="match status" value="1"/>
</dbReference>
<dbReference type="FunFam" id="3.40.50.720:FF:000094">
    <property type="entry name" value="Bifunctional protein FolD"/>
    <property type="match status" value="1"/>
</dbReference>
<dbReference type="FunFam" id="3.40.50.10860:FF:000005">
    <property type="entry name" value="C-1-tetrahydrofolate synthase, cytoplasmic, putative"/>
    <property type="match status" value="1"/>
</dbReference>
<dbReference type="Gene3D" id="3.40.50.10860">
    <property type="entry name" value="Leucine Dehydrogenase, chain A, domain 1"/>
    <property type="match status" value="1"/>
</dbReference>
<dbReference type="Gene3D" id="3.40.50.720">
    <property type="entry name" value="NAD(P)-binding Rossmann-like Domain"/>
    <property type="match status" value="1"/>
</dbReference>
<dbReference type="HAMAP" id="MF_01576">
    <property type="entry name" value="THF_DHG_CYH"/>
    <property type="match status" value="1"/>
</dbReference>
<dbReference type="InterPro" id="IPR046346">
    <property type="entry name" value="Aminoacid_DH-like_N_sf"/>
</dbReference>
<dbReference type="InterPro" id="IPR036291">
    <property type="entry name" value="NAD(P)-bd_dom_sf"/>
</dbReference>
<dbReference type="InterPro" id="IPR000672">
    <property type="entry name" value="THF_DH/CycHdrlase"/>
</dbReference>
<dbReference type="InterPro" id="IPR020630">
    <property type="entry name" value="THF_DH/CycHdrlase_cat_dom"/>
</dbReference>
<dbReference type="InterPro" id="IPR020867">
    <property type="entry name" value="THF_DH/CycHdrlase_CS"/>
</dbReference>
<dbReference type="InterPro" id="IPR020631">
    <property type="entry name" value="THF_DH/CycHdrlase_NAD-bd_dom"/>
</dbReference>
<dbReference type="NCBIfam" id="NF008058">
    <property type="entry name" value="PRK10792.1"/>
    <property type="match status" value="1"/>
</dbReference>
<dbReference type="NCBIfam" id="NF010783">
    <property type="entry name" value="PRK14186.1"/>
    <property type="match status" value="1"/>
</dbReference>
<dbReference type="NCBIfam" id="NF010786">
    <property type="entry name" value="PRK14189.1"/>
    <property type="match status" value="1"/>
</dbReference>
<dbReference type="PANTHER" id="PTHR48099:SF5">
    <property type="entry name" value="C-1-TETRAHYDROFOLATE SYNTHASE, CYTOPLASMIC"/>
    <property type="match status" value="1"/>
</dbReference>
<dbReference type="PANTHER" id="PTHR48099">
    <property type="entry name" value="C-1-TETRAHYDROFOLATE SYNTHASE, CYTOPLASMIC-RELATED"/>
    <property type="match status" value="1"/>
</dbReference>
<dbReference type="Pfam" id="PF00763">
    <property type="entry name" value="THF_DHG_CYH"/>
    <property type="match status" value="1"/>
</dbReference>
<dbReference type="Pfam" id="PF02882">
    <property type="entry name" value="THF_DHG_CYH_C"/>
    <property type="match status" value="1"/>
</dbReference>
<dbReference type="PRINTS" id="PR00085">
    <property type="entry name" value="THFDHDRGNASE"/>
</dbReference>
<dbReference type="SUPFAM" id="SSF53223">
    <property type="entry name" value="Aminoacid dehydrogenase-like, N-terminal domain"/>
    <property type="match status" value="1"/>
</dbReference>
<dbReference type="SUPFAM" id="SSF51735">
    <property type="entry name" value="NAD(P)-binding Rossmann-fold domains"/>
    <property type="match status" value="1"/>
</dbReference>
<dbReference type="PROSITE" id="PS00766">
    <property type="entry name" value="THF_DHG_CYH_1"/>
    <property type="match status" value="1"/>
</dbReference>
<dbReference type="PROSITE" id="PS00767">
    <property type="entry name" value="THF_DHG_CYH_2"/>
    <property type="match status" value="1"/>
</dbReference>
<proteinExistence type="inferred from homology"/>
<organism>
    <name type="scientific">Burkholderia mallei (strain NCTC 10247)</name>
    <dbReference type="NCBI Taxonomy" id="320389"/>
    <lineage>
        <taxon>Bacteria</taxon>
        <taxon>Pseudomonadati</taxon>
        <taxon>Pseudomonadota</taxon>
        <taxon>Betaproteobacteria</taxon>
        <taxon>Burkholderiales</taxon>
        <taxon>Burkholderiaceae</taxon>
        <taxon>Burkholderia</taxon>
        <taxon>pseudomallei group</taxon>
    </lineage>
</organism>
<gene>
    <name evidence="1" type="primary">folD</name>
    <name type="ordered locus">BMA10247_1506</name>
</gene>
<evidence type="ECO:0000255" key="1">
    <source>
        <dbReference type="HAMAP-Rule" id="MF_01576"/>
    </source>
</evidence>